<comment type="function">
    <text evidence="1">Required for accurate and efficient protein synthesis under certain stress conditions. May act as a fidelity factor of the translation reaction, by catalyzing a one-codon backward translocation of tRNAs on improperly translocated ribosomes. Back-translocation proceeds from a post-translocation (POST) complex to a pre-translocation (PRE) complex, thus giving elongation factor G a second chance to translocate the tRNAs correctly. Binds to ribosomes in a GTP-dependent manner.</text>
</comment>
<comment type="catalytic activity">
    <reaction evidence="1">
        <text>GTP + H2O = GDP + phosphate + H(+)</text>
        <dbReference type="Rhea" id="RHEA:19669"/>
        <dbReference type="ChEBI" id="CHEBI:15377"/>
        <dbReference type="ChEBI" id="CHEBI:15378"/>
        <dbReference type="ChEBI" id="CHEBI:37565"/>
        <dbReference type="ChEBI" id="CHEBI:43474"/>
        <dbReference type="ChEBI" id="CHEBI:58189"/>
        <dbReference type="EC" id="3.6.5.n1"/>
    </reaction>
</comment>
<comment type="subcellular location">
    <subcellularLocation>
        <location evidence="1">Cell membrane</location>
        <topology evidence="1">Peripheral membrane protein</topology>
        <orientation evidence="1">Cytoplasmic side</orientation>
    </subcellularLocation>
</comment>
<comment type="similarity">
    <text evidence="1">Belongs to the TRAFAC class translation factor GTPase superfamily. Classic translation factor GTPase family. LepA subfamily.</text>
</comment>
<accession>A4W0W0</accession>
<gene>
    <name evidence="1" type="primary">lepA</name>
    <name type="ordered locus">SSU98_0841</name>
</gene>
<proteinExistence type="inferred from homology"/>
<feature type="chain" id="PRO_1000032061" description="Elongation factor 4">
    <location>
        <begin position="1"/>
        <end position="610"/>
    </location>
</feature>
<feature type="domain" description="tr-type G">
    <location>
        <begin position="11"/>
        <end position="193"/>
    </location>
</feature>
<feature type="binding site" evidence="1">
    <location>
        <begin position="23"/>
        <end position="28"/>
    </location>
    <ligand>
        <name>GTP</name>
        <dbReference type="ChEBI" id="CHEBI:37565"/>
    </ligand>
</feature>
<feature type="binding site" evidence="1">
    <location>
        <begin position="140"/>
        <end position="143"/>
    </location>
    <ligand>
        <name>GTP</name>
        <dbReference type="ChEBI" id="CHEBI:37565"/>
    </ligand>
</feature>
<protein>
    <recommendedName>
        <fullName evidence="1">Elongation factor 4</fullName>
        <shortName evidence="1">EF-4</shortName>
        <ecNumber evidence="1">3.6.5.n1</ecNumber>
    </recommendedName>
    <alternativeName>
        <fullName evidence="1">Ribosomal back-translocase LepA</fullName>
    </alternativeName>
</protein>
<dbReference type="EC" id="3.6.5.n1" evidence="1"/>
<dbReference type="EMBL" id="CP000408">
    <property type="protein sequence ID" value="ABP91999.1"/>
    <property type="molecule type" value="Genomic_DNA"/>
</dbReference>
<dbReference type="SMR" id="A4W0W0"/>
<dbReference type="KEGG" id="ssv:SSU98_0841"/>
<dbReference type="HOGENOM" id="CLU_009995_3_3_9"/>
<dbReference type="GO" id="GO:0005886">
    <property type="term" value="C:plasma membrane"/>
    <property type="evidence" value="ECO:0007669"/>
    <property type="project" value="UniProtKB-SubCell"/>
</dbReference>
<dbReference type="GO" id="GO:0005525">
    <property type="term" value="F:GTP binding"/>
    <property type="evidence" value="ECO:0007669"/>
    <property type="project" value="UniProtKB-UniRule"/>
</dbReference>
<dbReference type="GO" id="GO:0003924">
    <property type="term" value="F:GTPase activity"/>
    <property type="evidence" value="ECO:0007669"/>
    <property type="project" value="UniProtKB-UniRule"/>
</dbReference>
<dbReference type="GO" id="GO:0043022">
    <property type="term" value="F:ribosome binding"/>
    <property type="evidence" value="ECO:0007669"/>
    <property type="project" value="UniProtKB-UniRule"/>
</dbReference>
<dbReference type="GO" id="GO:0003746">
    <property type="term" value="F:translation elongation factor activity"/>
    <property type="evidence" value="ECO:0007669"/>
    <property type="project" value="UniProtKB-UniRule"/>
</dbReference>
<dbReference type="GO" id="GO:0045727">
    <property type="term" value="P:positive regulation of translation"/>
    <property type="evidence" value="ECO:0007669"/>
    <property type="project" value="UniProtKB-UniRule"/>
</dbReference>
<dbReference type="CDD" id="cd03699">
    <property type="entry name" value="EF4_II"/>
    <property type="match status" value="1"/>
</dbReference>
<dbReference type="CDD" id="cd16260">
    <property type="entry name" value="EF4_III"/>
    <property type="match status" value="1"/>
</dbReference>
<dbReference type="CDD" id="cd01890">
    <property type="entry name" value="LepA"/>
    <property type="match status" value="1"/>
</dbReference>
<dbReference type="CDD" id="cd03709">
    <property type="entry name" value="lepA_C"/>
    <property type="match status" value="1"/>
</dbReference>
<dbReference type="FunFam" id="3.40.50.300:FF:000078">
    <property type="entry name" value="Elongation factor 4"/>
    <property type="match status" value="1"/>
</dbReference>
<dbReference type="FunFam" id="2.40.30.10:FF:000015">
    <property type="entry name" value="Translation factor GUF1, mitochondrial"/>
    <property type="match status" value="1"/>
</dbReference>
<dbReference type="FunFam" id="3.30.70.240:FF:000007">
    <property type="entry name" value="Translation factor GUF1, mitochondrial"/>
    <property type="match status" value="1"/>
</dbReference>
<dbReference type="FunFam" id="3.30.70.2570:FF:000001">
    <property type="entry name" value="Translation factor GUF1, mitochondrial"/>
    <property type="match status" value="1"/>
</dbReference>
<dbReference type="FunFam" id="3.30.70.870:FF:000004">
    <property type="entry name" value="Translation factor GUF1, mitochondrial"/>
    <property type="match status" value="1"/>
</dbReference>
<dbReference type="Gene3D" id="3.30.70.240">
    <property type="match status" value="1"/>
</dbReference>
<dbReference type="Gene3D" id="3.30.70.2570">
    <property type="entry name" value="Elongation factor 4, C-terminal domain"/>
    <property type="match status" value="1"/>
</dbReference>
<dbReference type="Gene3D" id="3.30.70.870">
    <property type="entry name" value="Elongation Factor G (Translational Gtpase), domain 3"/>
    <property type="match status" value="1"/>
</dbReference>
<dbReference type="Gene3D" id="3.40.50.300">
    <property type="entry name" value="P-loop containing nucleotide triphosphate hydrolases"/>
    <property type="match status" value="1"/>
</dbReference>
<dbReference type="Gene3D" id="2.40.30.10">
    <property type="entry name" value="Translation factors"/>
    <property type="match status" value="1"/>
</dbReference>
<dbReference type="HAMAP" id="MF_00071">
    <property type="entry name" value="LepA"/>
    <property type="match status" value="1"/>
</dbReference>
<dbReference type="InterPro" id="IPR006297">
    <property type="entry name" value="EF-4"/>
</dbReference>
<dbReference type="InterPro" id="IPR041095">
    <property type="entry name" value="EFG_II"/>
</dbReference>
<dbReference type="InterPro" id="IPR035647">
    <property type="entry name" value="EFG_III/V"/>
</dbReference>
<dbReference type="InterPro" id="IPR000640">
    <property type="entry name" value="EFG_V-like"/>
</dbReference>
<dbReference type="InterPro" id="IPR004161">
    <property type="entry name" value="EFTu-like_2"/>
</dbReference>
<dbReference type="InterPro" id="IPR031157">
    <property type="entry name" value="G_TR_CS"/>
</dbReference>
<dbReference type="InterPro" id="IPR038363">
    <property type="entry name" value="LepA_C_sf"/>
</dbReference>
<dbReference type="InterPro" id="IPR013842">
    <property type="entry name" value="LepA_CTD"/>
</dbReference>
<dbReference type="InterPro" id="IPR035654">
    <property type="entry name" value="LepA_IV"/>
</dbReference>
<dbReference type="InterPro" id="IPR027417">
    <property type="entry name" value="P-loop_NTPase"/>
</dbReference>
<dbReference type="InterPro" id="IPR005225">
    <property type="entry name" value="Small_GTP-bd"/>
</dbReference>
<dbReference type="InterPro" id="IPR000795">
    <property type="entry name" value="T_Tr_GTP-bd_dom"/>
</dbReference>
<dbReference type="InterPro" id="IPR009000">
    <property type="entry name" value="Transl_B-barrel_sf"/>
</dbReference>
<dbReference type="NCBIfam" id="TIGR01393">
    <property type="entry name" value="lepA"/>
    <property type="match status" value="1"/>
</dbReference>
<dbReference type="NCBIfam" id="TIGR00231">
    <property type="entry name" value="small_GTP"/>
    <property type="match status" value="1"/>
</dbReference>
<dbReference type="PANTHER" id="PTHR43512:SF4">
    <property type="entry name" value="TRANSLATION FACTOR GUF1 HOMOLOG, CHLOROPLASTIC"/>
    <property type="match status" value="1"/>
</dbReference>
<dbReference type="PANTHER" id="PTHR43512">
    <property type="entry name" value="TRANSLATION FACTOR GUF1-RELATED"/>
    <property type="match status" value="1"/>
</dbReference>
<dbReference type="Pfam" id="PF00679">
    <property type="entry name" value="EFG_C"/>
    <property type="match status" value="1"/>
</dbReference>
<dbReference type="Pfam" id="PF14492">
    <property type="entry name" value="EFG_III"/>
    <property type="match status" value="1"/>
</dbReference>
<dbReference type="Pfam" id="PF00009">
    <property type="entry name" value="GTP_EFTU"/>
    <property type="match status" value="1"/>
</dbReference>
<dbReference type="Pfam" id="PF03144">
    <property type="entry name" value="GTP_EFTU_D2"/>
    <property type="match status" value="1"/>
</dbReference>
<dbReference type="Pfam" id="PF06421">
    <property type="entry name" value="LepA_C"/>
    <property type="match status" value="1"/>
</dbReference>
<dbReference type="PRINTS" id="PR00315">
    <property type="entry name" value="ELONGATNFCT"/>
</dbReference>
<dbReference type="SMART" id="SM00838">
    <property type="entry name" value="EFG_C"/>
    <property type="match status" value="1"/>
</dbReference>
<dbReference type="SUPFAM" id="SSF54980">
    <property type="entry name" value="EF-G C-terminal domain-like"/>
    <property type="match status" value="2"/>
</dbReference>
<dbReference type="SUPFAM" id="SSF52540">
    <property type="entry name" value="P-loop containing nucleoside triphosphate hydrolases"/>
    <property type="match status" value="1"/>
</dbReference>
<dbReference type="SUPFAM" id="SSF50447">
    <property type="entry name" value="Translation proteins"/>
    <property type="match status" value="1"/>
</dbReference>
<dbReference type="PROSITE" id="PS00301">
    <property type="entry name" value="G_TR_1"/>
    <property type="match status" value="1"/>
</dbReference>
<dbReference type="PROSITE" id="PS51722">
    <property type="entry name" value="G_TR_2"/>
    <property type="match status" value="1"/>
</dbReference>
<organism>
    <name type="scientific">Streptococcus suis (strain 98HAH33)</name>
    <dbReference type="NCBI Taxonomy" id="391296"/>
    <lineage>
        <taxon>Bacteria</taxon>
        <taxon>Bacillati</taxon>
        <taxon>Bacillota</taxon>
        <taxon>Bacilli</taxon>
        <taxon>Lactobacillales</taxon>
        <taxon>Streptococcaceae</taxon>
        <taxon>Streptococcus</taxon>
    </lineage>
</organism>
<name>LEPA_STRS2</name>
<sequence length="610" mass="68014">MNLEDLKKRQEKIRNFSIIAHIDHGKSTLADRILEKTETVSSREMQAQLLDSMDLERERGITIKLNAIELNYTAKDGETYIFHLIDTPGHVDFTYEVSRSLAACEGAILVVDAAQGIEAQTLANVYLALDNDLEILPIINKIDLPAADPERVRQEIEDVIGLDASEAVPTSAKAGIGIEEILEQIVEKVPAPTGDVEAPLQALIFDSVYDPYRGVILQVRIVNGVVKPGDTIQMMSNGKTFDVTEVGIFTPKAIGRDYLATGDVGYIAASIKTVADTRVGDTVTLAENPASEPLAGYKQMNPMVFAGIYPIDSNKYNDLREALEKLQLNDASLQFEPETSQALGFGFRCGFLGLLHMDVIQERIEREFNIDLIMTAPSVVYHVNMTDGEMIDVANPSEFPDPTKIATIEEPYVKAQIMVPQEYVGAVMELAQRKRGDFVTMDYIDDNRVNVIYQIPLAEIVFDFFDKLKSSTRGYASFDYEISEYRSSKLVKMDILLNGDKVDALSFIVHKEFAYERGKIIVDKLKKIIPRQQFEVPIQAAIGQKIVARSDIKALRKNVLAKCYGGDVSRKRKLLEKQKAGKKRMKAIGSVEVPQEAFLSVLSMDEDDKK</sequence>
<evidence type="ECO:0000255" key="1">
    <source>
        <dbReference type="HAMAP-Rule" id="MF_00071"/>
    </source>
</evidence>
<reference key="1">
    <citation type="journal article" date="2007" name="PLoS ONE">
        <title>A glimpse of streptococcal toxic shock syndrome from comparative genomics of S. suis 2 Chinese isolates.</title>
        <authorList>
            <person name="Chen C."/>
            <person name="Tang J."/>
            <person name="Dong W."/>
            <person name="Wang C."/>
            <person name="Feng Y."/>
            <person name="Wang J."/>
            <person name="Zheng F."/>
            <person name="Pan X."/>
            <person name="Liu D."/>
            <person name="Li M."/>
            <person name="Song Y."/>
            <person name="Zhu X."/>
            <person name="Sun H."/>
            <person name="Feng T."/>
            <person name="Guo Z."/>
            <person name="Ju A."/>
            <person name="Ge J."/>
            <person name="Dong Y."/>
            <person name="Sun W."/>
            <person name="Jiang Y."/>
            <person name="Wang J."/>
            <person name="Yan J."/>
            <person name="Yang H."/>
            <person name="Wang X."/>
            <person name="Gao G.F."/>
            <person name="Yang R."/>
            <person name="Wang J."/>
            <person name="Yu J."/>
        </authorList>
    </citation>
    <scope>NUCLEOTIDE SEQUENCE [LARGE SCALE GENOMIC DNA]</scope>
    <source>
        <strain>98HAH33</strain>
    </source>
</reference>
<keyword id="KW-1003">Cell membrane</keyword>
<keyword id="KW-0342">GTP-binding</keyword>
<keyword id="KW-0378">Hydrolase</keyword>
<keyword id="KW-0472">Membrane</keyword>
<keyword id="KW-0547">Nucleotide-binding</keyword>
<keyword id="KW-0648">Protein biosynthesis</keyword>